<keyword id="KW-0067">ATP-binding</keyword>
<keyword id="KW-0963">Cytoplasm</keyword>
<keyword id="KW-0227">DNA damage</keyword>
<keyword id="KW-0234">DNA repair</keyword>
<keyword id="KW-0235">DNA replication</keyword>
<keyword id="KW-0238">DNA-binding</keyword>
<keyword id="KW-0547">Nucleotide-binding</keyword>
<keyword id="KW-1185">Reference proteome</keyword>
<keyword id="KW-0742">SOS response</keyword>
<comment type="function">
    <text evidence="1">The RecF protein is involved in DNA metabolism; it is required for DNA replication and normal SOS inducibility. RecF binds preferentially to single-stranded, linear DNA. It also seems to bind ATP.</text>
</comment>
<comment type="subcellular location">
    <subcellularLocation>
        <location evidence="1">Cytoplasm</location>
    </subcellularLocation>
</comment>
<comment type="similarity">
    <text evidence="1">Belongs to the RecF family.</text>
</comment>
<proteinExistence type="inferred from homology"/>
<accession>Q2JIB8</accession>
<reference key="1">
    <citation type="journal article" date="2007" name="ISME J.">
        <title>Population level functional diversity in a microbial community revealed by comparative genomic and metagenomic analyses.</title>
        <authorList>
            <person name="Bhaya D."/>
            <person name="Grossman A.R."/>
            <person name="Steunou A.-S."/>
            <person name="Khuri N."/>
            <person name="Cohan F.M."/>
            <person name="Hamamura N."/>
            <person name="Melendrez M.C."/>
            <person name="Bateson M.M."/>
            <person name="Ward D.M."/>
            <person name="Heidelberg J.F."/>
        </authorList>
    </citation>
    <scope>NUCLEOTIDE SEQUENCE [LARGE SCALE GENOMIC DNA]</scope>
    <source>
        <strain>JA-2-3B'a(2-13)</strain>
    </source>
</reference>
<organism>
    <name type="scientific">Synechococcus sp. (strain JA-2-3B'a(2-13))</name>
    <name type="common">Cyanobacteria bacterium Yellowstone B-Prime</name>
    <dbReference type="NCBI Taxonomy" id="321332"/>
    <lineage>
        <taxon>Bacteria</taxon>
        <taxon>Bacillati</taxon>
        <taxon>Cyanobacteriota</taxon>
        <taxon>Cyanophyceae</taxon>
        <taxon>Synechococcales</taxon>
        <taxon>Synechococcaceae</taxon>
        <taxon>Synechococcus</taxon>
    </lineage>
</organism>
<protein>
    <recommendedName>
        <fullName evidence="1">DNA replication and repair protein RecF</fullName>
    </recommendedName>
</protein>
<name>RECF_SYNJB</name>
<dbReference type="EMBL" id="CP000240">
    <property type="protein sequence ID" value="ABD03644.1"/>
    <property type="molecule type" value="Genomic_DNA"/>
</dbReference>
<dbReference type="RefSeq" id="WP_011434261.1">
    <property type="nucleotide sequence ID" value="NC_007776.1"/>
</dbReference>
<dbReference type="SMR" id="Q2JIB8"/>
<dbReference type="STRING" id="321332.CYB_2719"/>
<dbReference type="KEGG" id="cyb:CYB_2719"/>
<dbReference type="eggNOG" id="COG1195">
    <property type="taxonomic scope" value="Bacteria"/>
</dbReference>
<dbReference type="HOGENOM" id="CLU_040267_0_1_3"/>
<dbReference type="OrthoDB" id="9803889at2"/>
<dbReference type="Proteomes" id="UP000001938">
    <property type="component" value="Chromosome"/>
</dbReference>
<dbReference type="GO" id="GO:0005737">
    <property type="term" value="C:cytoplasm"/>
    <property type="evidence" value="ECO:0007669"/>
    <property type="project" value="UniProtKB-SubCell"/>
</dbReference>
<dbReference type="GO" id="GO:0005524">
    <property type="term" value="F:ATP binding"/>
    <property type="evidence" value="ECO:0007669"/>
    <property type="project" value="UniProtKB-UniRule"/>
</dbReference>
<dbReference type="GO" id="GO:0003697">
    <property type="term" value="F:single-stranded DNA binding"/>
    <property type="evidence" value="ECO:0007669"/>
    <property type="project" value="UniProtKB-UniRule"/>
</dbReference>
<dbReference type="GO" id="GO:0006260">
    <property type="term" value="P:DNA replication"/>
    <property type="evidence" value="ECO:0007669"/>
    <property type="project" value="UniProtKB-UniRule"/>
</dbReference>
<dbReference type="GO" id="GO:0000731">
    <property type="term" value="P:DNA synthesis involved in DNA repair"/>
    <property type="evidence" value="ECO:0007669"/>
    <property type="project" value="TreeGrafter"/>
</dbReference>
<dbReference type="GO" id="GO:0006302">
    <property type="term" value="P:double-strand break repair"/>
    <property type="evidence" value="ECO:0007669"/>
    <property type="project" value="TreeGrafter"/>
</dbReference>
<dbReference type="GO" id="GO:0009432">
    <property type="term" value="P:SOS response"/>
    <property type="evidence" value="ECO:0007669"/>
    <property type="project" value="UniProtKB-UniRule"/>
</dbReference>
<dbReference type="Gene3D" id="3.40.50.300">
    <property type="entry name" value="P-loop containing nucleotide triphosphate hydrolases"/>
    <property type="match status" value="1"/>
</dbReference>
<dbReference type="Gene3D" id="1.20.1050.90">
    <property type="entry name" value="RecF/RecN/SMC, N-terminal domain"/>
    <property type="match status" value="1"/>
</dbReference>
<dbReference type="HAMAP" id="MF_00365">
    <property type="entry name" value="RecF"/>
    <property type="match status" value="1"/>
</dbReference>
<dbReference type="InterPro" id="IPR001238">
    <property type="entry name" value="DNA-binding_RecF"/>
</dbReference>
<dbReference type="InterPro" id="IPR018078">
    <property type="entry name" value="DNA-binding_RecF_CS"/>
</dbReference>
<dbReference type="InterPro" id="IPR027417">
    <property type="entry name" value="P-loop_NTPase"/>
</dbReference>
<dbReference type="InterPro" id="IPR003395">
    <property type="entry name" value="RecF/RecN/SMC_N"/>
</dbReference>
<dbReference type="InterPro" id="IPR042174">
    <property type="entry name" value="RecF_2"/>
</dbReference>
<dbReference type="NCBIfam" id="TIGR00611">
    <property type="entry name" value="recf"/>
    <property type="match status" value="1"/>
</dbReference>
<dbReference type="PANTHER" id="PTHR32182">
    <property type="entry name" value="DNA REPLICATION AND REPAIR PROTEIN RECF"/>
    <property type="match status" value="1"/>
</dbReference>
<dbReference type="PANTHER" id="PTHR32182:SF0">
    <property type="entry name" value="DNA REPLICATION AND REPAIR PROTEIN RECF"/>
    <property type="match status" value="1"/>
</dbReference>
<dbReference type="Pfam" id="PF02463">
    <property type="entry name" value="SMC_N"/>
    <property type="match status" value="1"/>
</dbReference>
<dbReference type="SUPFAM" id="SSF52540">
    <property type="entry name" value="P-loop containing nucleoside triphosphate hydrolases"/>
    <property type="match status" value="1"/>
</dbReference>
<dbReference type="PROSITE" id="PS00617">
    <property type="entry name" value="RECF_1"/>
    <property type="match status" value="1"/>
</dbReference>
<dbReference type="PROSITE" id="PS00618">
    <property type="entry name" value="RECF_2"/>
    <property type="match status" value="1"/>
</dbReference>
<sequence length="380" mass="42644">MYLRSLHLRHFRNYRDQEITFDAPKTILVGENAQGKTNLLEAVELLATLRSRRASRDRELVYQEERQAQIAATVERLGVAHELVMELRSSGRRSLKVDGQVLRRQADFLGQVNAVVFSSLDLELVRGGPEARRNWLDGVLLQLEPAYLGLVEQYRQILRQRNALLKQDPAAAGDKFSQMDFWDAQLATTGSRIMRRRARLLQRLEPLAAHWHRVISGGRETLTLTYRPQVPLPDPQASPEVIQAQFLAEIRAKAAAEHSLGSSLVGPHRDEVELCINGVAARAYGSQGQQRTLVLALKLAELELIEQVVRDPPLLLLDDVLAELDLHRQNQLLEAIQERVQTLVTTTHLGSFDAGWLKAAQILQVQGGQLFPSKTGDGIP</sequence>
<gene>
    <name evidence="1" type="primary">recF</name>
    <name type="ordered locus">CYB_2719</name>
</gene>
<evidence type="ECO:0000255" key="1">
    <source>
        <dbReference type="HAMAP-Rule" id="MF_00365"/>
    </source>
</evidence>
<feature type="chain" id="PRO_0000236155" description="DNA replication and repair protein RecF">
    <location>
        <begin position="1"/>
        <end position="380"/>
    </location>
</feature>
<feature type="binding site" evidence="1">
    <location>
        <begin position="30"/>
        <end position="37"/>
    </location>
    <ligand>
        <name>ATP</name>
        <dbReference type="ChEBI" id="CHEBI:30616"/>
    </ligand>
</feature>